<gene>
    <name type="primary">gag</name>
</gene>
<name>GAG_HV1YF</name>
<keyword id="KW-0014">AIDS</keyword>
<keyword id="KW-0167">Capsid protein</keyword>
<keyword id="KW-1032">Host cell membrane</keyword>
<keyword id="KW-1035">Host cytoplasm</keyword>
<keyword id="KW-1039">Host endosome</keyword>
<keyword id="KW-1043">Host membrane</keyword>
<keyword id="KW-1048">Host nucleus</keyword>
<keyword id="KW-0945">Host-virus interaction</keyword>
<keyword id="KW-0449">Lipoprotein</keyword>
<keyword id="KW-0472">Membrane</keyword>
<keyword id="KW-0479">Metal-binding</keyword>
<keyword id="KW-0488">Methylation</keyword>
<keyword id="KW-0519">Myristate</keyword>
<keyword id="KW-0597">Phosphoprotein</keyword>
<keyword id="KW-1185">Reference proteome</keyword>
<keyword id="KW-0677">Repeat</keyword>
<keyword id="KW-0688">Ribosomal frameshifting</keyword>
<keyword id="KW-0694">RNA-binding</keyword>
<keyword id="KW-1198">Viral budding</keyword>
<keyword id="KW-1187">Viral budding via the host ESCRT complexes</keyword>
<keyword id="KW-0543">Viral nucleoprotein</keyword>
<keyword id="KW-1188">Viral release from host cell</keyword>
<keyword id="KW-0946">Virion</keyword>
<keyword id="KW-0862">Zinc</keyword>
<keyword id="KW-0863">Zinc-finger</keyword>
<feature type="initiator methionine" description="Removed; by host" evidence="1">
    <location>
        <position position="1"/>
    </location>
</feature>
<feature type="chain" id="PRO_0000261237" description="Gag polyprotein">
    <location>
        <begin position="2"/>
        <end position="512"/>
    </location>
</feature>
<feature type="chain" id="PRO_0000246428" description="Matrix protein p17" evidence="1">
    <location>
        <begin position="2"/>
        <end position="134"/>
    </location>
</feature>
<feature type="chain" id="PRO_0000246429" description="Capsid protein p24" evidence="1">
    <location>
        <begin position="135"/>
        <end position="365"/>
    </location>
</feature>
<feature type="peptide" id="PRO_0000246430" description="Spacer peptide 1" evidence="1">
    <location>
        <begin position="366"/>
        <end position="380"/>
    </location>
</feature>
<feature type="chain" id="PRO_0000246431" description="Nucleocapsid protein p7" evidence="1">
    <location>
        <begin position="381"/>
        <end position="437"/>
    </location>
</feature>
<feature type="peptide" id="PRO_0000246432" description="Spacer peptide 2" evidence="1">
    <location>
        <begin position="438"/>
        <end position="448"/>
    </location>
</feature>
<feature type="chain" id="PRO_0000246433" description="p6-gag" evidence="1">
    <location>
        <begin position="449"/>
        <end position="512"/>
    </location>
</feature>
<feature type="zinc finger region" description="CCHC-type 1" evidence="8">
    <location>
        <begin position="393"/>
        <end position="410"/>
    </location>
</feature>
<feature type="zinc finger region" description="CCHC-type 2" evidence="8">
    <location>
        <begin position="414"/>
        <end position="431"/>
    </location>
</feature>
<feature type="region of interest" description="Interaction with Gp41" evidence="6">
    <location>
        <begin position="7"/>
        <end position="31"/>
    </location>
</feature>
<feature type="region of interest" description="Interaction with host CALM1" evidence="5">
    <location>
        <begin position="8"/>
        <end position="43"/>
    </location>
</feature>
<feature type="region of interest" description="Interaction with host AP3D1" evidence="7">
    <location>
        <begin position="12"/>
        <end position="19"/>
    </location>
</feature>
<feature type="region of interest" description="Interaction with membrane phosphatidylinositol 4,5-bisphosphate and RNA" evidence="6">
    <location>
        <begin position="14"/>
        <end position="33"/>
    </location>
</feature>
<feature type="region of interest" description="Interaction with membrane phosphatidylinositol 4,5-bisphosphate" evidence="6">
    <location>
        <begin position="73"/>
        <end position="77"/>
    </location>
</feature>
<feature type="region of interest" description="Interaction with host PPIA/CYPA and NUP153" evidence="6">
    <location>
        <begin position="191"/>
        <end position="229"/>
    </location>
</feature>
<feature type="region of interest" description="PPIA/CYPA-binding loop" evidence="5">
    <location>
        <begin position="219"/>
        <end position="227"/>
    </location>
</feature>
<feature type="region of interest" description="Dimerization/Multimerization of capsid protein p24" evidence="5">
    <location>
        <begin position="279"/>
        <end position="365"/>
    </location>
</feature>
<feature type="region of interest" description="Disordered" evidence="9">
    <location>
        <begin position="440"/>
        <end position="512"/>
    </location>
</feature>
<feature type="short sequence motif" description="Nuclear export signal" evidence="1">
    <location>
        <begin position="16"/>
        <end position="22"/>
    </location>
</feature>
<feature type="short sequence motif" description="Nuclear localization signal" evidence="1">
    <location>
        <begin position="26"/>
        <end position="32"/>
    </location>
</feature>
<feature type="short sequence motif" description="PTAP/PSAP motif">
    <location>
        <begin position="462"/>
        <end position="465"/>
    </location>
</feature>
<feature type="short sequence motif" description="LYPX(n)L motif">
    <location>
        <begin position="494"/>
        <end position="504"/>
    </location>
</feature>
<feature type="compositionally biased region" description="Basic and acidic residues" evidence="9">
    <location>
        <begin position="473"/>
        <end position="491"/>
    </location>
</feature>
<feature type="site" description="Cleavage; by viral protease" evidence="1">
    <location>
        <begin position="134"/>
        <end position="135"/>
    </location>
</feature>
<feature type="site" description="Cleavage; by viral protease" evidence="1">
    <location>
        <begin position="365"/>
        <end position="366"/>
    </location>
</feature>
<feature type="site" description="Cleavage; by viral protease" evidence="1">
    <location>
        <begin position="380"/>
        <end position="381"/>
    </location>
</feature>
<feature type="site" description="Cleavage; by viral protease" evidence="1">
    <location>
        <begin position="437"/>
        <end position="438"/>
    </location>
</feature>
<feature type="site" description="Cleavage; by viral protease" evidence="1">
    <location>
        <begin position="453"/>
        <end position="454"/>
    </location>
</feature>
<feature type="modified residue" description="Asymmetric dimethylarginine; in Nucleocapsid protein p7; by host PRMT6" evidence="1">
    <location>
        <position position="390"/>
    </location>
</feature>
<feature type="modified residue" description="Asymmetric dimethylarginine; in Nucleocapsid protein p7; by host PRMT6" evidence="1">
    <location>
        <position position="412"/>
    </location>
</feature>
<feature type="lipid moiety-binding region" description="N-myristoyl glycine; by host" evidence="1">
    <location>
        <position position="2"/>
    </location>
</feature>
<dbReference type="EMBL" id="AJ006022">
    <property type="protein sequence ID" value="CAA06809.1"/>
    <property type="molecule type" value="Genomic_DNA"/>
</dbReference>
<dbReference type="SMR" id="O91079"/>
<dbReference type="IntAct" id="O91079">
    <property type="interactions" value="5"/>
</dbReference>
<dbReference type="PRO" id="PR:O91079"/>
<dbReference type="Proteomes" id="UP000007420">
    <property type="component" value="Segment"/>
</dbReference>
<dbReference type="GO" id="GO:0042025">
    <property type="term" value="C:host cell nucleus"/>
    <property type="evidence" value="ECO:0007669"/>
    <property type="project" value="UniProtKB-SubCell"/>
</dbReference>
<dbReference type="GO" id="GO:0020002">
    <property type="term" value="C:host cell plasma membrane"/>
    <property type="evidence" value="ECO:0007669"/>
    <property type="project" value="UniProtKB-SubCell"/>
</dbReference>
<dbReference type="GO" id="GO:0072494">
    <property type="term" value="C:host multivesicular body"/>
    <property type="evidence" value="ECO:0007669"/>
    <property type="project" value="UniProtKB-SubCell"/>
</dbReference>
<dbReference type="GO" id="GO:0016020">
    <property type="term" value="C:membrane"/>
    <property type="evidence" value="ECO:0007669"/>
    <property type="project" value="UniProtKB-KW"/>
</dbReference>
<dbReference type="GO" id="GO:0019013">
    <property type="term" value="C:viral nucleocapsid"/>
    <property type="evidence" value="ECO:0007669"/>
    <property type="project" value="UniProtKB-KW"/>
</dbReference>
<dbReference type="GO" id="GO:0055036">
    <property type="term" value="C:virion membrane"/>
    <property type="evidence" value="ECO:0007669"/>
    <property type="project" value="UniProtKB-SubCell"/>
</dbReference>
<dbReference type="GO" id="GO:0003723">
    <property type="term" value="F:RNA binding"/>
    <property type="evidence" value="ECO:0007669"/>
    <property type="project" value="UniProtKB-KW"/>
</dbReference>
<dbReference type="GO" id="GO:0005198">
    <property type="term" value="F:structural molecule activity"/>
    <property type="evidence" value="ECO:0007669"/>
    <property type="project" value="InterPro"/>
</dbReference>
<dbReference type="GO" id="GO:0008270">
    <property type="term" value="F:zinc ion binding"/>
    <property type="evidence" value="ECO:0007669"/>
    <property type="project" value="UniProtKB-KW"/>
</dbReference>
<dbReference type="GO" id="GO:0039702">
    <property type="term" value="P:viral budding via host ESCRT complex"/>
    <property type="evidence" value="ECO:0007669"/>
    <property type="project" value="UniProtKB-KW"/>
</dbReference>
<dbReference type="GO" id="GO:0075523">
    <property type="term" value="P:viral translational frameshifting"/>
    <property type="evidence" value="ECO:0007669"/>
    <property type="project" value="UniProtKB-KW"/>
</dbReference>
<dbReference type="FunFam" id="1.10.1200.30:FF:000001">
    <property type="entry name" value="Gag polyprotein"/>
    <property type="match status" value="1"/>
</dbReference>
<dbReference type="Gene3D" id="1.10.1200.30">
    <property type="match status" value="1"/>
</dbReference>
<dbReference type="Gene3D" id="6.10.250.390">
    <property type="match status" value="1"/>
</dbReference>
<dbReference type="Gene3D" id="1.10.375.10">
    <property type="entry name" value="Human Immunodeficiency Virus Type 1 Capsid Protein"/>
    <property type="match status" value="1"/>
</dbReference>
<dbReference type="Gene3D" id="1.10.150.90">
    <property type="entry name" value="Immunodeficiency lentiviruses, gag gene matrix protein p17"/>
    <property type="match status" value="1"/>
</dbReference>
<dbReference type="Gene3D" id="1.20.5.760">
    <property type="entry name" value="Single helix bin"/>
    <property type="match status" value="1"/>
</dbReference>
<dbReference type="Gene3D" id="4.10.60.10">
    <property type="entry name" value="Zinc finger, CCHC-type"/>
    <property type="match status" value="1"/>
</dbReference>
<dbReference type="InterPro" id="IPR045345">
    <property type="entry name" value="Gag_p24_C"/>
</dbReference>
<dbReference type="InterPro" id="IPR014817">
    <property type="entry name" value="Gag_p6"/>
</dbReference>
<dbReference type="InterPro" id="IPR000071">
    <property type="entry name" value="Lentvrl_matrix_N"/>
</dbReference>
<dbReference type="InterPro" id="IPR012344">
    <property type="entry name" value="Matrix_HIV/RSV_N"/>
</dbReference>
<dbReference type="InterPro" id="IPR050195">
    <property type="entry name" value="Primate_lentivir_Gag_pol-like"/>
</dbReference>
<dbReference type="InterPro" id="IPR008916">
    <property type="entry name" value="Retrov_capsid_C"/>
</dbReference>
<dbReference type="InterPro" id="IPR008919">
    <property type="entry name" value="Retrov_capsid_N"/>
</dbReference>
<dbReference type="InterPro" id="IPR010999">
    <property type="entry name" value="Retrovr_matrix"/>
</dbReference>
<dbReference type="InterPro" id="IPR001878">
    <property type="entry name" value="Znf_CCHC"/>
</dbReference>
<dbReference type="InterPro" id="IPR036875">
    <property type="entry name" value="Znf_CCHC_sf"/>
</dbReference>
<dbReference type="PANTHER" id="PTHR40389">
    <property type="entry name" value="ENDOGENOUS RETROVIRUS GROUP K MEMBER 24 GAG POLYPROTEIN-RELATED"/>
    <property type="match status" value="1"/>
</dbReference>
<dbReference type="PANTHER" id="PTHR40389:SF3">
    <property type="entry name" value="IGE-BINDING PROTEIN"/>
    <property type="match status" value="1"/>
</dbReference>
<dbReference type="Pfam" id="PF00540">
    <property type="entry name" value="Gag_p17"/>
    <property type="match status" value="1"/>
</dbReference>
<dbReference type="Pfam" id="PF00607">
    <property type="entry name" value="Gag_p24"/>
    <property type="match status" value="1"/>
</dbReference>
<dbReference type="Pfam" id="PF19317">
    <property type="entry name" value="Gag_p24_C"/>
    <property type="match status" value="1"/>
</dbReference>
<dbReference type="Pfam" id="PF08705">
    <property type="entry name" value="Gag_p6"/>
    <property type="match status" value="1"/>
</dbReference>
<dbReference type="Pfam" id="PF00098">
    <property type="entry name" value="zf-CCHC"/>
    <property type="match status" value="2"/>
</dbReference>
<dbReference type="PRINTS" id="PR00234">
    <property type="entry name" value="HIV1MATRIX"/>
</dbReference>
<dbReference type="SMART" id="SM00343">
    <property type="entry name" value="ZnF_C2HC"/>
    <property type="match status" value="2"/>
</dbReference>
<dbReference type="SUPFAM" id="SSF47836">
    <property type="entry name" value="Retroviral matrix proteins"/>
    <property type="match status" value="1"/>
</dbReference>
<dbReference type="SUPFAM" id="SSF47353">
    <property type="entry name" value="Retrovirus capsid dimerization domain-like"/>
    <property type="match status" value="1"/>
</dbReference>
<dbReference type="SUPFAM" id="SSF47943">
    <property type="entry name" value="Retrovirus capsid protein, N-terminal core domain"/>
    <property type="match status" value="1"/>
</dbReference>
<dbReference type="SUPFAM" id="SSF57756">
    <property type="entry name" value="Retrovirus zinc finger-like domains"/>
    <property type="match status" value="1"/>
</dbReference>
<dbReference type="PROSITE" id="PS50158">
    <property type="entry name" value="ZF_CCHC"/>
    <property type="match status" value="2"/>
</dbReference>
<evidence type="ECO:0000250" key="1"/>
<evidence type="ECO:0000250" key="2">
    <source>
        <dbReference type="UniProtKB" id="P03347"/>
    </source>
</evidence>
<evidence type="ECO:0000250" key="3">
    <source>
        <dbReference type="UniProtKB" id="P03348"/>
    </source>
</evidence>
<evidence type="ECO:0000250" key="4">
    <source>
        <dbReference type="UniProtKB" id="P03349"/>
    </source>
</evidence>
<evidence type="ECO:0000250" key="5">
    <source>
        <dbReference type="UniProtKB" id="P04591"/>
    </source>
</evidence>
<evidence type="ECO:0000250" key="6">
    <source>
        <dbReference type="UniProtKB" id="P12493"/>
    </source>
</evidence>
<evidence type="ECO:0000250" key="7">
    <source>
        <dbReference type="UniProtKB" id="P12497"/>
    </source>
</evidence>
<evidence type="ECO:0000255" key="8">
    <source>
        <dbReference type="PROSITE-ProRule" id="PRU00047"/>
    </source>
</evidence>
<evidence type="ECO:0000256" key="9">
    <source>
        <dbReference type="SAM" id="MobiDB-lite"/>
    </source>
</evidence>
<evidence type="ECO:0000305" key="10"/>
<comment type="function">
    <molecule>Gag polyprotein</molecule>
    <text evidence="5">Mediates, with Gag-Pol polyprotein, the essential events in virion assembly, including binding the plasma membrane, making the protein-protein interactions necessary to create spherical particles, recruiting the viral Env proteins, and packaging the genomic RNA via direct interactions with the RNA packaging sequence (Psi).</text>
</comment>
<comment type="function">
    <molecule>Matrix protein p17</molecule>
    <text evidence="1 6">Targets the polyprotein to the plasma membrane via a multipartite membrane-binding signal, that includes its myristoylated N-terminus (By similarity). Matrix protein is part of the pre-integration complex. Implicated in the release from host cell mediated by Vpu. Binds to RNA (By similarity).</text>
</comment>
<comment type="function">
    <molecule>Capsid protein p24</molecule>
    <text evidence="5 6">Forms the conical core that encapsulates the genomic RNA-nucleocapsid complex in the virion. Most core are conical, with only 7% tubular. The core is constituted by capsid protein hexamer subunits. The core is disassembled soon after virion entry (By similarity). The capsid promotes immune invasion by cloaking viral DNA from CGAS detection (By similarity). Host restriction factors such as TRIM5-alpha or TRIMCyp bind retroviral capsids and cause premature capsid disassembly, leading to blocks in reverse transcription. Capsid restriction by TRIM5 is one of the factors which restricts HIV-1 to the human species. Host PIN1 apparently facilitates the virion uncoating (By similarity). On the other hand, interactions with PDZD8 or CYPA stabilize the capsid (By similarity).</text>
</comment>
<comment type="function">
    <molecule>Nucleocapsid protein p7</molecule>
    <text evidence="5">Encapsulates and protects viral dimeric unspliced genomic RNA (gRNA). Binds these RNAs through its zinc fingers. Acts as a nucleic acid chaperone which is involved in rearangement of nucleic acid secondary structure during gRNA retrotranscription. Also facilitates template switch leading to recombination. As part of the polyprotein, participates in gRNA dimerization, packaging, tRNA incorporation and virion assembly.</text>
</comment>
<comment type="function">
    <molecule>p6-gag</molecule>
    <text evidence="6">Plays a role in budding of the assembled particle by interacting with the host class E VPS proteins TSG101 and PDCD6IP/AIP1.</text>
</comment>
<comment type="subunit">
    <molecule>Gag polyprotein</molecule>
    <text evidence="4 5">Homotrimer; further assembles as hexamers of trimers. Oligomerization possibly creates a central hole into which the cytoplasmic tail of the gp41 envelope protein may be inserted. Interacts with host TRIM22; this interaction seems to disrupt proper trafficking of Gag polyprotein and may interfere with budding. Interacts with host PDZD8. When ubiquitinated, interacts (via p6-gag domain) with host PACSIN2; this interaction allows PACSIN2 recruitment to viral assembly sites and its Interacts with MOV10 (By similarity).</text>
</comment>
<comment type="subunit">
    <molecule>Matrix protein p17</molecule>
    <text evidence="5 6">Homotrimer; further assembles as hexamers of trimers. Interacts with gp41 (via C-terminus). Interacts with host CALM1; this interaction induces a conformational change in the Matrix protein, triggering exposure of the myristate group. Interacts with host AP3D1; this interaction allows the polyprotein trafficking to multivesicular bodies during virus assembly. Part of the pre-integration complex (PIC) which is composed of viral genome, matrix protein, Vpr and integrase.</text>
</comment>
<comment type="subunit">
    <molecule>Capsid protein p24</molecule>
    <text evidence="5 6">Homodimer; the homodimer further multimerizes as homohexamers or homopentamers (By similarity). Interacts with host NUP98 (By similarity). Interacts with host PPIA/CYPA; this interaction stabilizes the capsid (By similarity). Interacts with host NUP153 (By similarity). Interacts with host PDZD8; this interaction stabilizes the capsid. Interacts with host TRIM5; this interaction destabilizes the capsid (By similarity). Interacts with host CPSF6 (By similarity). Interacts with host NONO; the interaction is weak (By similarity).</text>
</comment>
<comment type="subunit">
    <molecule>Nucleocapsid protein p7</molecule>
    <text evidence="6">Interacts with host NUP98.</text>
</comment>
<comment type="subunit">
    <molecule>p6-gag</molecule>
    <text evidence="3 6">Interacts with Vpr; this interaction allows Vpr incorporation into the virion. Interacts with host TSG101. p6-gag interacts with host PDCD6IP/AIP1.</text>
</comment>
<comment type="interaction">
    <interactant intactId="EBI-40204927">
        <id>O91079</id>
    </interactant>
    <interactant intactId="EBI-310624">
        <id>Q8WUM4</id>
        <label>PDCD6IP</label>
    </interactant>
    <organismsDiffer>true</organismsDiffer>
    <experiments>7</experiments>
</comment>
<comment type="subcellular location">
    <molecule>Gag polyprotein</molecule>
    <subcellularLocation>
        <location evidence="6">Host cell membrane</location>
        <topology evidence="6">Lipid-anchor</topology>
    </subcellularLocation>
    <subcellularLocation>
        <location evidence="6">Host endosome</location>
        <location evidence="6">Host multivesicular body</location>
    </subcellularLocation>
    <text evidence="6">These locations are probably linked to virus assembly sites. The main location is the cell membrane, but under some circumstances, late endosomal compartments can serve as productive sites for virion assembly.</text>
</comment>
<comment type="subcellular location">
    <molecule>Matrix protein p17</molecule>
    <subcellularLocation>
        <location evidence="6">Virion membrane</location>
        <topology evidence="6">Lipid-anchor</topology>
    </subcellularLocation>
    <subcellularLocation>
        <location evidence="1">Host nucleus</location>
    </subcellularLocation>
    <subcellularLocation>
        <location evidence="1">Host cytoplasm</location>
    </subcellularLocation>
</comment>
<comment type="subcellular location">
    <molecule>Capsid protein p24</molecule>
    <subcellularLocation>
        <location evidence="6">Virion</location>
    </subcellularLocation>
</comment>
<comment type="subcellular location">
    <molecule>Nucleocapsid protein p7</molecule>
    <subcellularLocation>
        <location evidence="6">Virion</location>
    </subcellularLocation>
</comment>
<comment type="alternative products">
    <event type="ribosomal frameshifting"/>
    <isoform>
        <id>O91079-1</id>
        <name>Gag polyprotein</name>
        <sequence type="displayed"/>
    </isoform>
    <isoform>
        <id>O91080-1</id>
        <name>Gag-Pol polyprotein</name>
        <sequence type="external"/>
    </isoform>
    <text>Translation results in the formation of the Gag polyprotein most of the time. Ribosomal frameshifting at the gag-pol genes boundary occurs at low frequency and produces the Gag-Pol polyprotein. This strategy of translation probably allows the virus to modulate the quantity of each viral protein. Maintenance of a correct Gag to Gag-Pol ratio is essential for RNA dimerization and viral infectivity.</text>
</comment>
<comment type="domain">
    <text evidence="6">Late-budding domains (L domains) are short sequence motifs essential for viral particle budding. They recruit proteins of the host ESCRT machinery (Endosomal Sorting Complex Required for Transport) or ESCRT-associated proteins. p6-gag contains two L domains: a PTAP/PSAP motif, which interacts with the UEV domain of TSG101 and a LYPX(n)L motif which interacts with PDCD6IP/AIP1.</text>
</comment>
<comment type="PTM">
    <text evidence="6">Gag-Pol polyprotein: Specific enzymatic cleavages by the viral protease yield mature proteins.</text>
</comment>
<comment type="PTM">
    <molecule>Matrix protein p17</molecule>
    <text evidence="5">Tyrosine phosphorylated presumably in the virion by a host kinase. Phosphorylation is apparently not a major regulator of membrane association.</text>
</comment>
<comment type="PTM">
    <text evidence="6">Capsid protein p24 is phosphorylated possibly by host MAPK1; this phosphorylation is necessary for Pin1-mediated virion uncoating.</text>
</comment>
<comment type="PTM">
    <text evidence="2">Nucleocapsid protein p7 is methylated by host PRMT6, impairing its function by reducing RNA annealing and the initiation of reverse transcription.</text>
</comment>
<comment type="miscellaneous">
    <text>HIV-1 lineages are divided in three main groups, M (for Major), O (for Outlier), and N (for New, or Non-M, Non-O). The vast majority of strains found worldwide belong to the group M. Group O seems to be endemic to and largely confined to Cameroon and neighboring countries in West Central Africa, where these viruses represent a small minority of HIV-1 strains. The group N is represented by a limited number of isolates from Cameroonian persons. The group M is further subdivided in 9 clades or subtypes (A to D, F to H, J and K).</text>
</comment>
<comment type="miscellaneous">
    <molecule>Isoform Gag polyprotein</molecule>
    <text>Produced by conventional translation.</text>
</comment>
<comment type="similarity">
    <text evidence="10">Belongs to the primate lentivirus group gag polyprotein family.</text>
</comment>
<protein>
    <recommendedName>
        <fullName>Gag polyprotein</fullName>
    </recommendedName>
    <alternativeName>
        <fullName>Pr55Gag</fullName>
    </alternativeName>
    <component>
        <recommendedName>
            <fullName>Matrix protein p17</fullName>
            <shortName>MA</shortName>
        </recommendedName>
    </component>
    <component>
        <recommendedName>
            <fullName>Capsid protein p24</fullName>
            <shortName>CA</shortName>
        </recommendedName>
    </component>
    <component>
        <recommendedName>
            <fullName evidence="6">Spacer peptide 1</fullName>
            <shortName>SP1</shortName>
        </recommendedName>
        <alternativeName>
            <fullName>p2</fullName>
        </alternativeName>
    </component>
    <component>
        <recommendedName>
            <fullName>Nucleocapsid protein p7</fullName>
            <shortName>NC</shortName>
        </recommendedName>
    </component>
    <component>
        <recommendedName>
            <fullName evidence="6">Spacer peptide 2</fullName>
            <shortName>SP2</shortName>
        </recommendedName>
        <alternativeName>
            <fullName>p1</fullName>
        </alternativeName>
    </component>
    <component>
        <recommendedName>
            <fullName>p6-gag</fullName>
        </recommendedName>
    </component>
</protein>
<accession>O91079</accession>
<reference key="1">
    <citation type="journal article" date="1998" name="Nat. Med.">
        <title>Identification of a new human immunodeficiency virus type 1 distinct from group M and group O.</title>
        <authorList>
            <person name="Simon F."/>
            <person name="Mauclere P."/>
            <person name="Roques P."/>
            <person name="Loussert-Ajaka I."/>
            <person name="Muller-Trutwin M.C."/>
            <person name="Saragosti S."/>
            <person name="Georges-Courbot M.C."/>
            <person name="Barre-Sinoussi F."/>
            <person name="Brun-Vezinet F."/>
        </authorList>
    </citation>
    <scope>NUCLEOTIDE SEQUENCE [GENOMIC DNA]</scope>
</reference>
<proteinExistence type="evidence at protein level"/>
<sequence length="512" mass="56917">MGARASVLTGGKLDQWESIYLRPGGKKKYRMKHLVWASRELERFACNPGLMDTADGCAKLLNQLEPALKTGSEELRSLYNALAVLYCVHSRIQIHNTQEALDKIKEKQEQHKPEPKNPEAGAAAATDSNISRNYPLVQTAQGQMVHQPLTPRTLNAWVKVIEEKAFSPEVIPMFMALSEGATPSDLNTMLNTVGGHQAAMQMLKEVINEEAADWDRTHPVPVGPLPPGQLRDPRGSDIAGTTSTLAEQVAWMTANPPVPVGDIYRRWIVLGLNRIVRMYSPVSILEIKQGPKEPFRDYVDRFYKTLRAEQATQEVKNWMTETLLVQNANPDCKQLLKALGPGATLEEMMTACQGVGGPAHKARVLAEAMSQVQQPTTSVFAQRGNFKGIRKPIKCFNCGKEGHLARNCKAPRRGGCWKCGQEGHQMKDCKNEGRQANFLGKSWSPFKGRPGNFPQTTTRKEPTAPPLESYGFQEEKSTQGKEMQENQERTENSLYPPLTSLRSLFGNDPSSQ</sequence>
<organism>
    <name type="scientific">Human immunodeficiency virus type 1 group N (isolate YBF30)</name>
    <name type="common">HIV-1</name>
    <dbReference type="NCBI Taxonomy" id="388818"/>
    <lineage>
        <taxon>Viruses</taxon>
        <taxon>Riboviria</taxon>
        <taxon>Pararnavirae</taxon>
        <taxon>Artverviricota</taxon>
        <taxon>Revtraviricetes</taxon>
        <taxon>Ortervirales</taxon>
        <taxon>Retroviridae</taxon>
        <taxon>Orthoretrovirinae</taxon>
        <taxon>Lentivirus</taxon>
        <taxon>Human immunodeficiency virus type 1</taxon>
    </lineage>
</organism>
<organismHost>
    <name type="scientific">Homo sapiens</name>
    <name type="common">Human</name>
    <dbReference type="NCBI Taxonomy" id="9606"/>
</organismHost>